<organism>
    <name type="scientific">Influenza A virus (strain A/Equine/C.Detroit/1/1964 H7N7)</name>
    <dbReference type="NCBI Taxonomy" id="217836"/>
    <lineage>
        <taxon>Viruses</taxon>
        <taxon>Riboviria</taxon>
        <taxon>Orthornavirae</taxon>
        <taxon>Negarnaviricota</taxon>
        <taxon>Polyploviricotina</taxon>
        <taxon>Insthoviricetes</taxon>
        <taxon>Articulavirales</taxon>
        <taxon>Orthomyxoviridae</taxon>
        <taxon>Alphainfluenzavirus</taxon>
        <taxon>Alphainfluenzavirus influenzae</taxon>
        <taxon>Influenza A virus</taxon>
    </lineage>
</organism>
<sequence length="570" mass="64326">MNTQILILATSAFLCVRADKICLGHHAESNGTKVDTLTEKGIEVVNATETVEQKNIPKICSKGKQTIDLGQCGLLGTIIGPPQCDQFLEFSANLIIERREGNDICYPGKFDDEETLRQILRKSGGIKKENMGFTYTGVRTNGETSACRRSRSSFYAEMKWLLSNTDNEVFPQMTKSYKNTKREPALIIWGIHHSGSTAEQTRLYGSGNKLITVWSSKYQQSFAPNPGPRPQINGQSGRIDFYWLMLDPNDTVNFSFNGAFIAPDRASFLRGKSLGIQSDAQLDNNCEGECYHIGGTIISNLPFQNINSRAIGKCPRYVKQKSLMLATGMKNVPENSTHKQLTHHMRKKRGLFGAIAGFIENGWEGLIDGWYGYRHQNAQGEGTAADYKSTQSAINQITGKLNRLIEKTNQQFELIDNEFNEIEKQIGNVINWTRDSIIEIWSYNAEFLVAVENQHTIDLTDSEMNKLYEKVRRQLRENAEEDGNGCFEIFHQCDNDCMASIRNNTYDHKKYRKEAIQNRIQIDAVKLSSGYKDVILWFSFGASCFLFLAIAMGLAFICIKNGNMRCTICI</sequence>
<organismHost>
    <name type="scientific">Aves</name>
    <dbReference type="NCBI Taxonomy" id="8782"/>
</organismHost>
<organismHost>
    <name type="scientific">Equus caballus</name>
    <name type="common">Horse</name>
    <dbReference type="NCBI Taxonomy" id="9796"/>
</organismHost>
<organismHost>
    <name type="scientific">Homo sapiens</name>
    <name type="common">Human</name>
    <dbReference type="NCBI Taxonomy" id="9606"/>
</organismHost>
<organismHost>
    <name type="scientific">Phocidae</name>
    <name type="common">true seals</name>
    <dbReference type="NCBI Taxonomy" id="9709"/>
</organismHost>
<proteinExistence type="inferred from homology"/>
<reference key="1">
    <citation type="journal article" date="1992" name="Virus Res.">
        <title>Sequence analysis of the equine H7 influenza virus haemagglutinin gene.</title>
        <authorList>
            <person name="Gibson C.A."/>
            <person name="Daniels R.S."/>
            <person name="Oxford J.S."/>
            <person name="McCauley J.W."/>
        </authorList>
    </citation>
    <scope>NUCLEOTIDE SEQUENCE [GENOMIC RNA]</scope>
</reference>
<dbReference type="EMBL" id="X62555">
    <property type="protein sequence ID" value="CAA44432.1"/>
    <property type="molecule type" value="Genomic_RNA"/>
</dbReference>
<dbReference type="PIR" id="S22014">
    <property type="entry name" value="S22014"/>
</dbReference>
<dbReference type="SMR" id="P26096"/>
<dbReference type="GlyCosmos" id="P26096">
    <property type="glycosylation" value="7 sites, No reported glycans"/>
</dbReference>
<dbReference type="GO" id="GO:0020002">
    <property type="term" value="C:host cell plasma membrane"/>
    <property type="evidence" value="ECO:0007669"/>
    <property type="project" value="UniProtKB-SubCell"/>
</dbReference>
<dbReference type="GO" id="GO:0016020">
    <property type="term" value="C:membrane"/>
    <property type="evidence" value="ECO:0007669"/>
    <property type="project" value="UniProtKB-UniRule"/>
</dbReference>
<dbReference type="GO" id="GO:0019031">
    <property type="term" value="C:viral envelope"/>
    <property type="evidence" value="ECO:0007669"/>
    <property type="project" value="UniProtKB-UniRule"/>
</dbReference>
<dbReference type="GO" id="GO:0055036">
    <property type="term" value="C:virion membrane"/>
    <property type="evidence" value="ECO:0007669"/>
    <property type="project" value="UniProtKB-SubCell"/>
</dbReference>
<dbReference type="GO" id="GO:0046789">
    <property type="term" value="F:host cell surface receptor binding"/>
    <property type="evidence" value="ECO:0007669"/>
    <property type="project" value="UniProtKB-UniRule"/>
</dbReference>
<dbReference type="GO" id="GO:0075512">
    <property type="term" value="P:clathrin-dependent endocytosis of virus by host cell"/>
    <property type="evidence" value="ECO:0007669"/>
    <property type="project" value="UniProtKB-UniRule"/>
</dbReference>
<dbReference type="GO" id="GO:0039654">
    <property type="term" value="P:fusion of virus membrane with host endosome membrane"/>
    <property type="evidence" value="ECO:0007669"/>
    <property type="project" value="UniProtKB-UniRule"/>
</dbReference>
<dbReference type="GO" id="GO:0019064">
    <property type="term" value="P:fusion of virus membrane with host plasma membrane"/>
    <property type="evidence" value="ECO:0007669"/>
    <property type="project" value="InterPro"/>
</dbReference>
<dbReference type="GO" id="GO:0046761">
    <property type="term" value="P:viral budding from plasma membrane"/>
    <property type="evidence" value="ECO:0007669"/>
    <property type="project" value="UniProtKB-UniRule"/>
</dbReference>
<dbReference type="GO" id="GO:0019062">
    <property type="term" value="P:virion attachment to host cell"/>
    <property type="evidence" value="ECO:0007669"/>
    <property type="project" value="UniProtKB-KW"/>
</dbReference>
<dbReference type="Gene3D" id="3.90.20.10">
    <property type="match status" value="1"/>
</dbReference>
<dbReference type="Gene3D" id="3.90.209.20">
    <property type="match status" value="1"/>
</dbReference>
<dbReference type="HAMAP" id="MF_04072">
    <property type="entry name" value="INFV_HEMA"/>
    <property type="match status" value="1"/>
</dbReference>
<dbReference type="InterPro" id="IPR008980">
    <property type="entry name" value="Capsid_hemagglutn"/>
</dbReference>
<dbReference type="InterPro" id="IPR013828">
    <property type="entry name" value="Hemagglutn_HA1_a/b_dom_sf"/>
</dbReference>
<dbReference type="InterPro" id="IPR000149">
    <property type="entry name" value="Hemagglutn_influenz_A"/>
</dbReference>
<dbReference type="InterPro" id="IPR001364">
    <property type="entry name" value="Hemagglutn_influenz_A/B"/>
</dbReference>
<dbReference type="Pfam" id="PF00509">
    <property type="entry name" value="Hemagglutinin"/>
    <property type="match status" value="1"/>
</dbReference>
<dbReference type="PRINTS" id="PR00330">
    <property type="entry name" value="HEMAGGLUTN1"/>
</dbReference>
<dbReference type="PRINTS" id="PR00329">
    <property type="entry name" value="HEMAGGLUTN12"/>
</dbReference>
<dbReference type="SUPFAM" id="SSF58064">
    <property type="entry name" value="Influenza hemagglutinin (stalk)"/>
    <property type="match status" value="1"/>
</dbReference>
<dbReference type="SUPFAM" id="SSF49818">
    <property type="entry name" value="Viral protein domain"/>
    <property type="match status" value="1"/>
</dbReference>
<evidence type="ECO:0000255" key="1">
    <source>
        <dbReference type="HAMAP-Rule" id="MF_04072"/>
    </source>
</evidence>
<evidence type="ECO:0000305" key="2"/>
<protein>
    <recommendedName>
        <fullName evidence="1">Hemagglutinin</fullName>
    </recommendedName>
    <component>
        <recommendedName>
            <fullName evidence="1">Hemagglutinin HA1 chain</fullName>
        </recommendedName>
    </component>
    <component>
        <recommendedName>
            <fullName evidence="1">Hemagglutinin HA2 chain</fullName>
        </recommendedName>
    </component>
</protein>
<gene>
    <name evidence="1" type="primary">HA</name>
</gene>
<keyword id="KW-1167">Clathrin- and caveolin-independent endocytosis of virus by host</keyword>
<keyword id="KW-1165">Clathrin-mediated endocytosis of virus by host</keyword>
<keyword id="KW-1015">Disulfide bond</keyword>
<keyword id="KW-1170">Fusion of virus membrane with host endosomal membrane</keyword>
<keyword id="KW-1168">Fusion of virus membrane with host membrane</keyword>
<keyword id="KW-0325">Glycoprotein</keyword>
<keyword id="KW-0348">Hemagglutinin</keyword>
<keyword id="KW-1032">Host cell membrane</keyword>
<keyword id="KW-1043">Host membrane</keyword>
<keyword id="KW-0945">Host-virus interaction</keyword>
<keyword id="KW-0449">Lipoprotein</keyword>
<keyword id="KW-0472">Membrane</keyword>
<keyword id="KW-0564">Palmitate</keyword>
<keyword id="KW-0732">Signal</keyword>
<keyword id="KW-0812">Transmembrane</keyword>
<keyword id="KW-1133">Transmembrane helix</keyword>
<keyword id="KW-1161">Viral attachment to host cell</keyword>
<keyword id="KW-0261">Viral envelope protein</keyword>
<keyword id="KW-1162">Viral penetration into host cytoplasm</keyword>
<keyword id="KW-0946">Virion</keyword>
<keyword id="KW-1164">Virus endocytosis by host</keyword>
<keyword id="KW-1160">Virus entry into host cell</keyword>
<accession>P26096</accession>
<comment type="function">
    <text>Binds to sialic acid-containing receptors on the cell surface, bringing about the attachment of the virus particle to the cell. This attachment induces virion internalization of about two third of the virus particles through clathrin-dependent endocytosis and about one third through a clathrin- and caveolin-independent pathway. Plays a major role in the determination of host range restriction and virulence. Class I viral fusion protein. Responsible for penetration of the virus into the cell cytoplasm by mediating the fusion of the membrane of the endocytosed virus particle with the endosomal membrane. Low pH in endosomes induces an irreversible conformational change in HA2, releasing the fusion hydrophobic peptide. Several trimers are required to form a competent fusion pore.</text>
</comment>
<comment type="function">
    <text evidence="1">Binds to sialic acid-containing receptors on the cell surface, bringing about the attachment of the virus particle to the cell. This attachment induces virion internalization either through clathrin-dependent endocytosis or through clathrin- and caveolin-independent pathway. Plays a major role in the determination of host range restriction and virulence. Class I viral fusion protein. Responsible for penetration of the virus into the cell cytoplasm by mediating the fusion of the membrane of the endocytosed virus particle with the endosomal membrane. Low pH in endosomes induces an irreversible conformational change in HA2, releasing the fusion hydrophobic peptide. Several trimers are required to form a competent fusion pore.</text>
</comment>
<comment type="subunit">
    <text evidence="1">Homotrimer of disulfide-linked HA1-HA2.</text>
</comment>
<comment type="subcellular location">
    <subcellularLocation>
        <location evidence="1">Virion membrane</location>
        <topology evidence="1">Single-pass type I membrane protein</topology>
    </subcellularLocation>
    <subcellularLocation>
        <location evidence="1">Host apical cell membrane</location>
        <topology evidence="1">Single-pass type I membrane protein</topology>
    </subcellularLocation>
    <text evidence="1">Targeted to the apical plasma membrane in epithelial polarized cells through a signal present in the transmembrane domain. Associated with glycosphingolipid- and cholesterol-enriched detergent-resistant lipid rafts.</text>
</comment>
<comment type="PTM">
    <text evidence="1">Palmitoylated.</text>
</comment>
<comment type="PTM">
    <text evidence="1">In natural infection, inactive HA is matured into HA1 and HA2 outside the cell by one or more trypsin-like, arginine-specific endoprotease secreted by the bronchial epithelial cells. One identified protease that may be involved in this process is secreted in lungs by club cells.</text>
</comment>
<comment type="miscellaneous">
    <text>Major glycoprotein, comprises over 80% of the envelope proteins present in virus particle.</text>
</comment>
<comment type="miscellaneous">
    <text>The extent of infection into host organism is determined by HA. Influenza viruses bud from the apical surface of polarized epithelial cells (e.g. bronchial epithelial cells) into lumen of lungs and are therefore usually pneumotropic. The reason is that HA is cleaved by tryptase clara which is restricted to lungs. However, HAs of H5 and H7 pantropic avian viruses subtypes can be cleaved by furin and subtilisin-type enzymes, allowing the virus to grow in other organs than lungs.</text>
</comment>
<comment type="miscellaneous">
    <text evidence="2">The influenza A genome consist of 8 RNA segments. Genetic variation of hemagglutinin and/or neuraminidase genes results in the emergence of new influenza strains. The mechanism of variation can be the result of point mutations or the result of genetic reassortment between segments of two different strains.</text>
</comment>
<comment type="similarity">
    <text evidence="1">Belongs to the influenza viruses hemagglutinin family.</text>
</comment>
<feature type="signal peptide" evidence="1">
    <location>
        <begin position="1"/>
        <end position="18"/>
    </location>
</feature>
<feature type="chain" id="PRO_0000440405" description="Hemagglutinin" evidence="1">
    <location>
        <begin position="19"/>
        <end position="570"/>
    </location>
</feature>
<feature type="chain" id="PRO_0000038972" description="Hemagglutinin HA1 chain" evidence="1">
    <location>
        <begin position="19"/>
        <end position="348"/>
    </location>
</feature>
<feature type="chain" id="PRO_0000038973" description="Hemagglutinin HA2 chain" evidence="1">
    <location>
        <begin position="350"/>
        <end position="570"/>
    </location>
</feature>
<feature type="topological domain" description="Extracellular" evidence="1">
    <location>
        <begin position="19"/>
        <end position="533"/>
    </location>
</feature>
<feature type="transmembrane region" description="Helical" evidence="1">
    <location>
        <begin position="534"/>
        <end position="554"/>
    </location>
</feature>
<feature type="topological domain" description="Cytoplasmic" evidence="1">
    <location>
        <begin position="555"/>
        <end position="570"/>
    </location>
</feature>
<feature type="site" description="Cleavage; by host" evidence="1">
    <location>
        <begin position="349"/>
        <end position="350"/>
    </location>
</feature>
<feature type="lipid moiety-binding region" description="S-palmitoyl cysteine; by host" evidence="1">
    <location>
        <position position="566"/>
    </location>
</feature>
<feature type="lipid moiety-binding region" description="S-palmitoyl cysteine; by host" evidence="1">
    <location>
        <position position="569"/>
    </location>
</feature>
<feature type="glycosylation site" description="N-linked (GlcNAc...) asparagine; by host" evidence="1">
    <location>
        <position position="30"/>
    </location>
</feature>
<feature type="glycosylation site" description="N-linked (GlcNAc...) asparagine; by host" evidence="1">
    <location>
        <position position="46"/>
    </location>
</feature>
<feature type="glycosylation site" description="N-linked (GlcNAc...) asparagine; by host" evidence="1">
    <location>
        <position position="249"/>
    </location>
</feature>
<feature type="glycosylation site" description="N-linked (GlcNAc...) asparagine; by host" evidence="1">
    <location>
        <position position="253"/>
    </location>
</feature>
<feature type="glycosylation site" description="N-linked (GlcNAc...) asparagine; by host" evidence="1">
    <location>
        <position position="335"/>
    </location>
</feature>
<feature type="glycosylation site" description="N-linked (GlcNAc...) asparagine; by host" evidence="1">
    <location>
        <position position="431"/>
    </location>
</feature>
<feature type="glycosylation site" description="N-linked (GlcNAc...) asparagine; by host" evidence="1">
    <location>
        <position position="503"/>
    </location>
</feature>
<feature type="disulfide bond" description="Interchain (between HA1 and HA2 chains)" evidence="1">
    <location>
        <begin position="22"/>
        <end position="486"/>
    </location>
</feature>
<feature type="disulfide bond" evidence="1">
    <location>
        <begin position="60"/>
        <end position="286"/>
    </location>
</feature>
<feature type="disulfide bond" evidence="1">
    <location>
        <begin position="72"/>
        <end position="84"/>
    </location>
</feature>
<feature type="disulfide bond" evidence="1">
    <location>
        <begin position="105"/>
        <end position="147"/>
    </location>
</feature>
<feature type="disulfide bond" evidence="1">
    <location>
        <begin position="290"/>
        <end position="314"/>
    </location>
</feature>
<feature type="disulfide bond" evidence="1">
    <location>
        <begin position="493"/>
        <end position="497"/>
    </location>
</feature>
<name>HEMA_I64A5</name>